<comment type="function">
    <text evidence="1">Transfers and isomerizes the ribose moiety from AdoMet to the 7-aminomethyl group of 7-deazaguanine (preQ1-tRNA) to give epoxyqueuosine (oQ-tRNA).</text>
</comment>
<comment type="catalytic activity">
    <reaction evidence="1">
        <text>7-aminomethyl-7-carbaguanosine(34) in tRNA + S-adenosyl-L-methionine = epoxyqueuosine(34) in tRNA + adenine + L-methionine + 2 H(+)</text>
        <dbReference type="Rhea" id="RHEA:32155"/>
        <dbReference type="Rhea" id="RHEA-COMP:10342"/>
        <dbReference type="Rhea" id="RHEA-COMP:18582"/>
        <dbReference type="ChEBI" id="CHEBI:15378"/>
        <dbReference type="ChEBI" id="CHEBI:16708"/>
        <dbReference type="ChEBI" id="CHEBI:57844"/>
        <dbReference type="ChEBI" id="CHEBI:59789"/>
        <dbReference type="ChEBI" id="CHEBI:82833"/>
        <dbReference type="ChEBI" id="CHEBI:194443"/>
        <dbReference type="EC" id="2.4.99.17"/>
    </reaction>
</comment>
<comment type="pathway">
    <text evidence="1">tRNA modification; tRNA-queuosine biosynthesis.</text>
</comment>
<comment type="subunit">
    <text evidence="1">Monomer.</text>
</comment>
<comment type="subcellular location">
    <subcellularLocation>
        <location evidence="1">Cytoplasm</location>
    </subcellularLocation>
</comment>
<comment type="similarity">
    <text evidence="1">Belongs to the QueA family.</text>
</comment>
<reference key="1">
    <citation type="journal article" date="2008" name="PLoS ONE">
        <title>Comparative analysis of Acinetobacters: three genomes for three lifestyles.</title>
        <authorList>
            <person name="Vallenet D."/>
            <person name="Nordmann P."/>
            <person name="Barbe V."/>
            <person name="Poirel L."/>
            <person name="Mangenot S."/>
            <person name="Bataille E."/>
            <person name="Dossat C."/>
            <person name="Gas S."/>
            <person name="Kreimeyer A."/>
            <person name="Lenoble P."/>
            <person name="Oztas S."/>
            <person name="Poulain J."/>
            <person name="Segurens B."/>
            <person name="Robert C."/>
            <person name="Abergel C."/>
            <person name="Claverie J.-M."/>
            <person name="Raoult D."/>
            <person name="Medigue C."/>
            <person name="Weissenbach J."/>
            <person name="Cruveiller S."/>
        </authorList>
    </citation>
    <scope>NUCLEOTIDE SEQUENCE [LARGE SCALE GENOMIC DNA]</scope>
    <source>
        <strain>AYE</strain>
    </source>
</reference>
<sequence length="345" mass="38700">MQLSDFSFELPDELIARYPLETRSASRLLHLDAKGQYHDHMFTDIIDLFEEGDLLVLNDTKVMKARLKGKRATGGAIEILVERMLNHTTAYCHIKASNSPKAGAELFVGADNIPVIVRGRHENLFVVEFSQPILPVLEQYGQLPIPPYFNREAEEIDTERYQTVFHNPEKIASVAAPTASLHFDEELLAELDQKGVKKTFVTLHVGAGTFMPVRTDDITNHVMHSEWCDVPQETIDLILATKARGNKVIAVGTTATRALESAAQAHGGKIAAWTGDTQIFIYPGYEFCIVDRLITNFHLPESTLLMLVSALSNRENILAAYEHAVKDRYRFFSYGDAMLIDKLEV</sequence>
<evidence type="ECO:0000255" key="1">
    <source>
        <dbReference type="HAMAP-Rule" id="MF_00113"/>
    </source>
</evidence>
<feature type="chain" id="PRO_1000094744" description="S-adenosylmethionine:tRNA ribosyltransferase-isomerase">
    <location>
        <begin position="1"/>
        <end position="345"/>
    </location>
</feature>
<keyword id="KW-0963">Cytoplasm</keyword>
<keyword id="KW-0671">Queuosine biosynthesis</keyword>
<keyword id="KW-0949">S-adenosyl-L-methionine</keyword>
<keyword id="KW-0808">Transferase</keyword>
<dbReference type="EC" id="2.4.99.17" evidence="1"/>
<dbReference type="EMBL" id="CU459141">
    <property type="protein sequence ID" value="CAM85499.1"/>
    <property type="molecule type" value="Genomic_DNA"/>
</dbReference>
<dbReference type="RefSeq" id="WP_001177136.1">
    <property type="nucleotide sequence ID" value="NZ_JBDGFB010000017.1"/>
</dbReference>
<dbReference type="SMR" id="B0V628"/>
<dbReference type="EnsemblBacteria" id="CAM85499">
    <property type="protein sequence ID" value="CAM85499"/>
    <property type="gene ID" value="ABAYE0531"/>
</dbReference>
<dbReference type="KEGG" id="aby:ABAYE0531"/>
<dbReference type="HOGENOM" id="CLU_039110_1_0_6"/>
<dbReference type="UniPathway" id="UPA00392"/>
<dbReference type="GO" id="GO:0005737">
    <property type="term" value="C:cytoplasm"/>
    <property type="evidence" value="ECO:0007669"/>
    <property type="project" value="UniProtKB-SubCell"/>
</dbReference>
<dbReference type="GO" id="GO:0051075">
    <property type="term" value="F:S-adenosylmethionine:tRNA ribosyltransferase-isomerase activity"/>
    <property type="evidence" value="ECO:0007669"/>
    <property type="project" value="UniProtKB-EC"/>
</dbReference>
<dbReference type="GO" id="GO:0008616">
    <property type="term" value="P:queuosine biosynthetic process"/>
    <property type="evidence" value="ECO:0007669"/>
    <property type="project" value="UniProtKB-UniRule"/>
</dbReference>
<dbReference type="GO" id="GO:0002099">
    <property type="term" value="P:tRNA wobble guanine modification"/>
    <property type="evidence" value="ECO:0007669"/>
    <property type="project" value="TreeGrafter"/>
</dbReference>
<dbReference type="FunFam" id="3.40.1780.10:FF:000001">
    <property type="entry name" value="S-adenosylmethionine:tRNA ribosyltransferase-isomerase"/>
    <property type="match status" value="1"/>
</dbReference>
<dbReference type="Gene3D" id="2.40.10.240">
    <property type="entry name" value="QueA-like"/>
    <property type="match status" value="1"/>
</dbReference>
<dbReference type="Gene3D" id="3.40.1780.10">
    <property type="entry name" value="QueA-like"/>
    <property type="match status" value="1"/>
</dbReference>
<dbReference type="HAMAP" id="MF_00113">
    <property type="entry name" value="QueA"/>
    <property type="match status" value="1"/>
</dbReference>
<dbReference type="InterPro" id="IPR003699">
    <property type="entry name" value="QueA"/>
</dbReference>
<dbReference type="InterPro" id="IPR042118">
    <property type="entry name" value="QueA_dom1"/>
</dbReference>
<dbReference type="InterPro" id="IPR042119">
    <property type="entry name" value="QueA_dom2"/>
</dbReference>
<dbReference type="InterPro" id="IPR036100">
    <property type="entry name" value="QueA_sf"/>
</dbReference>
<dbReference type="NCBIfam" id="NF001140">
    <property type="entry name" value="PRK00147.1"/>
    <property type="match status" value="1"/>
</dbReference>
<dbReference type="NCBIfam" id="TIGR00113">
    <property type="entry name" value="queA"/>
    <property type="match status" value="1"/>
</dbReference>
<dbReference type="PANTHER" id="PTHR30307">
    <property type="entry name" value="S-ADENOSYLMETHIONINE:TRNA RIBOSYLTRANSFERASE-ISOMERASE"/>
    <property type="match status" value="1"/>
</dbReference>
<dbReference type="PANTHER" id="PTHR30307:SF0">
    <property type="entry name" value="S-ADENOSYLMETHIONINE:TRNA RIBOSYLTRANSFERASE-ISOMERASE"/>
    <property type="match status" value="1"/>
</dbReference>
<dbReference type="Pfam" id="PF02547">
    <property type="entry name" value="Queuosine_synth"/>
    <property type="match status" value="1"/>
</dbReference>
<dbReference type="SUPFAM" id="SSF111337">
    <property type="entry name" value="QueA-like"/>
    <property type="match status" value="1"/>
</dbReference>
<proteinExistence type="inferred from homology"/>
<protein>
    <recommendedName>
        <fullName evidence="1">S-adenosylmethionine:tRNA ribosyltransferase-isomerase</fullName>
        <ecNumber evidence="1">2.4.99.17</ecNumber>
    </recommendedName>
    <alternativeName>
        <fullName evidence="1">Queuosine biosynthesis protein QueA</fullName>
    </alternativeName>
</protein>
<gene>
    <name evidence="1" type="primary">queA</name>
    <name type="ordered locus">ABAYE0531</name>
</gene>
<accession>B0V628</accession>
<name>QUEA_ACIBY</name>
<organism>
    <name type="scientific">Acinetobacter baumannii (strain AYE)</name>
    <dbReference type="NCBI Taxonomy" id="509173"/>
    <lineage>
        <taxon>Bacteria</taxon>
        <taxon>Pseudomonadati</taxon>
        <taxon>Pseudomonadota</taxon>
        <taxon>Gammaproteobacteria</taxon>
        <taxon>Moraxellales</taxon>
        <taxon>Moraxellaceae</taxon>
        <taxon>Acinetobacter</taxon>
        <taxon>Acinetobacter calcoaceticus/baumannii complex</taxon>
    </lineage>
</organism>